<gene>
    <name evidence="1" type="primary">coaD</name>
    <name type="ordered locus">MS1951</name>
</gene>
<sequence length="159" mass="17948">MTKTVIYPGTFDPITYGHLDIIERSAVLFPQVLVAVASNPTKKPLFELAERVRLAEESVAHLPNVQVIGFSDLLANVVKERHITAIIRGMRTTMDFEYELQLAHLNRALTDGVESLFLPSTEKWSYVSSTIVREIYLHRGDVSQFVPPPVLTALMEKNR</sequence>
<proteinExistence type="inferred from homology"/>
<feature type="chain" id="PRO_0000156233" description="Phosphopantetheine adenylyltransferase">
    <location>
        <begin position="1"/>
        <end position="159"/>
    </location>
</feature>
<feature type="binding site" evidence="1">
    <location>
        <begin position="10"/>
        <end position="11"/>
    </location>
    <ligand>
        <name>ATP</name>
        <dbReference type="ChEBI" id="CHEBI:30616"/>
    </ligand>
</feature>
<feature type="binding site" evidence="1">
    <location>
        <position position="10"/>
    </location>
    <ligand>
        <name>substrate</name>
    </ligand>
</feature>
<feature type="binding site" evidence="1">
    <location>
        <position position="18"/>
    </location>
    <ligand>
        <name>ATP</name>
        <dbReference type="ChEBI" id="CHEBI:30616"/>
    </ligand>
</feature>
<feature type="binding site" evidence="1">
    <location>
        <position position="42"/>
    </location>
    <ligand>
        <name>substrate</name>
    </ligand>
</feature>
<feature type="binding site" evidence="1">
    <location>
        <position position="74"/>
    </location>
    <ligand>
        <name>substrate</name>
    </ligand>
</feature>
<feature type="binding site" evidence="1">
    <location>
        <position position="88"/>
    </location>
    <ligand>
        <name>substrate</name>
    </ligand>
</feature>
<feature type="binding site" evidence="1">
    <location>
        <begin position="89"/>
        <end position="91"/>
    </location>
    <ligand>
        <name>ATP</name>
        <dbReference type="ChEBI" id="CHEBI:30616"/>
    </ligand>
</feature>
<feature type="binding site" evidence="1">
    <location>
        <position position="99"/>
    </location>
    <ligand>
        <name>ATP</name>
        <dbReference type="ChEBI" id="CHEBI:30616"/>
    </ligand>
</feature>
<feature type="binding site" evidence="1">
    <location>
        <begin position="124"/>
        <end position="130"/>
    </location>
    <ligand>
        <name>ATP</name>
        <dbReference type="ChEBI" id="CHEBI:30616"/>
    </ligand>
</feature>
<feature type="site" description="Transition state stabilizer" evidence="1">
    <location>
        <position position="18"/>
    </location>
</feature>
<evidence type="ECO:0000255" key="1">
    <source>
        <dbReference type="HAMAP-Rule" id="MF_00151"/>
    </source>
</evidence>
<comment type="function">
    <text evidence="1">Reversibly transfers an adenylyl group from ATP to 4'-phosphopantetheine, yielding dephospho-CoA (dPCoA) and pyrophosphate.</text>
</comment>
<comment type="catalytic activity">
    <reaction evidence="1">
        <text>(R)-4'-phosphopantetheine + ATP + H(+) = 3'-dephospho-CoA + diphosphate</text>
        <dbReference type="Rhea" id="RHEA:19801"/>
        <dbReference type="ChEBI" id="CHEBI:15378"/>
        <dbReference type="ChEBI" id="CHEBI:30616"/>
        <dbReference type="ChEBI" id="CHEBI:33019"/>
        <dbReference type="ChEBI" id="CHEBI:57328"/>
        <dbReference type="ChEBI" id="CHEBI:61723"/>
        <dbReference type="EC" id="2.7.7.3"/>
    </reaction>
</comment>
<comment type="cofactor">
    <cofactor evidence="1">
        <name>Mg(2+)</name>
        <dbReference type="ChEBI" id="CHEBI:18420"/>
    </cofactor>
</comment>
<comment type="pathway">
    <text evidence="1">Cofactor biosynthesis; coenzyme A biosynthesis; CoA from (R)-pantothenate: step 4/5.</text>
</comment>
<comment type="subunit">
    <text evidence="1">Homohexamer.</text>
</comment>
<comment type="subcellular location">
    <subcellularLocation>
        <location evidence="1">Cytoplasm</location>
    </subcellularLocation>
</comment>
<comment type="similarity">
    <text evidence="1">Belongs to the bacterial CoaD family.</text>
</comment>
<reference key="1">
    <citation type="journal article" date="2004" name="Nat. Biotechnol.">
        <title>The genome sequence of the capnophilic rumen bacterium Mannheimia succiniciproducens.</title>
        <authorList>
            <person name="Hong S.H."/>
            <person name="Kim J.S."/>
            <person name="Lee S.Y."/>
            <person name="In Y.H."/>
            <person name="Choi S.S."/>
            <person name="Rih J.-K."/>
            <person name="Kim C.H."/>
            <person name="Jeong H."/>
            <person name="Hur C.G."/>
            <person name="Kim J.J."/>
        </authorList>
    </citation>
    <scope>NUCLEOTIDE SEQUENCE [LARGE SCALE GENOMIC DNA]</scope>
    <source>
        <strain>KCTC 0769BP / MBEL55E</strain>
    </source>
</reference>
<dbReference type="EC" id="2.7.7.3" evidence="1"/>
<dbReference type="EMBL" id="AE016827">
    <property type="protein sequence ID" value="AAU38558.1"/>
    <property type="molecule type" value="Genomic_DNA"/>
</dbReference>
<dbReference type="RefSeq" id="WP_011201109.1">
    <property type="nucleotide sequence ID" value="NC_006300.1"/>
</dbReference>
<dbReference type="SMR" id="Q65R52"/>
<dbReference type="STRING" id="221988.MS1951"/>
<dbReference type="KEGG" id="msu:MS1951"/>
<dbReference type="eggNOG" id="COG0669">
    <property type="taxonomic scope" value="Bacteria"/>
</dbReference>
<dbReference type="HOGENOM" id="CLU_100149_0_1_6"/>
<dbReference type="OrthoDB" id="9806661at2"/>
<dbReference type="UniPathway" id="UPA00241">
    <property type="reaction ID" value="UER00355"/>
</dbReference>
<dbReference type="Proteomes" id="UP000000607">
    <property type="component" value="Chromosome"/>
</dbReference>
<dbReference type="GO" id="GO:0005737">
    <property type="term" value="C:cytoplasm"/>
    <property type="evidence" value="ECO:0007669"/>
    <property type="project" value="UniProtKB-SubCell"/>
</dbReference>
<dbReference type="GO" id="GO:0005524">
    <property type="term" value="F:ATP binding"/>
    <property type="evidence" value="ECO:0007669"/>
    <property type="project" value="UniProtKB-KW"/>
</dbReference>
<dbReference type="GO" id="GO:0004595">
    <property type="term" value="F:pantetheine-phosphate adenylyltransferase activity"/>
    <property type="evidence" value="ECO:0007669"/>
    <property type="project" value="UniProtKB-UniRule"/>
</dbReference>
<dbReference type="GO" id="GO:0015937">
    <property type="term" value="P:coenzyme A biosynthetic process"/>
    <property type="evidence" value="ECO:0007669"/>
    <property type="project" value="UniProtKB-UniRule"/>
</dbReference>
<dbReference type="CDD" id="cd02163">
    <property type="entry name" value="PPAT"/>
    <property type="match status" value="1"/>
</dbReference>
<dbReference type="Gene3D" id="3.40.50.620">
    <property type="entry name" value="HUPs"/>
    <property type="match status" value="1"/>
</dbReference>
<dbReference type="HAMAP" id="MF_00151">
    <property type="entry name" value="PPAT_bact"/>
    <property type="match status" value="1"/>
</dbReference>
<dbReference type="InterPro" id="IPR004821">
    <property type="entry name" value="Cyt_trans-like"/>
</dbReference>
<dbReference type="InterPro" id="IPR001980">
    <property type="entry name" value="PPAT"/>
</dbReference>
<dbReference type="InterPro" id="IPR014729">
    <property type="entry name" value="Rossmann-like_a/b/a_fold"/>
</dbReference>
<dbReference type="NCBIfam" id="TIGR01510">
    <property type="entry name" value="coaD_prev_kdtB"/>
    <property type="match status" value="1"/>
</dbReference>
<dbReference type="NCBIfam" id="TIGR00125">
    <property type="entry name" value="cyt_tran_rel"/>
    <property type="match status" value="1"/>
</dbReference>
<dbReference type="PANTHER" id="PTHR21342">
    <property type="entry name" value="PHOSPHOPANTETHEINE ADENYLYLTRANSFERASE"/>
    <property type="match status" value="1"/>
</dbReference>
<dbReference type="PANTHER" id="PTHR21342:SF1">
    <property type="entry name" value="PHOSPHOPANTETHEINE ADENYLYLTRANSFERASE"/>
    <property type="match status" value="1"/>
</dbReference>
<dbReference type="Pfam" id="PF01467">
    <property type="entry name" value="CTP_transf_like"/>
    <property type="match status" value="1"/>
</dbReference>
<dbReference type="PRINTS" id="PR01020">
    <property type="entry name" value="LPSBIOSNTHSS"/>
</dbReference>
<dbReference type="SUPFAM" id="SSF52374">
    <property type="entry name" value="Nucleotidylyl transferase"/>
    <property type="match status" value="1"/>
</dbReference>
<name>COAD_MANSM</name>
<accession>Q65R52</accession>
<protein>
    <recommendedName>
        <fullName evidence="1">Phosphopantetheine adenylyltransferase</fullName>
        <ecNumber evidence="1">2.7.7.3</ecNumber>
    </recommendedName>
    <alternativeName>
        <fullName evidence="1">Dephospho-CoA pyrophosphorylase</fullName>
    </alternativeName>
    <alternativeName>
        <fullName evidence="1">Pantetheine-phosphate adenylyltransferase</fullName>
        <shortName evidence="1">PPAT</shortName>
    </alternativeName>
</protein>
<organism>
    <name type="scientific">Mannheimia succiniciproducens (strain KCTC 0769BP / MBEL55E)</name>
    <dbReference type="NCBI Taxonomy" id="221988"/>
    <lineage>
        <taxon>Bacteria</taxon>
        <taxon>Pseudomonadati</taxon>
        <taxon>Pseudomonadota</taxon>
        <taxon>Gammaproteobacteria</taxon>
        <taxon>Pasteurellales</taxon>
        <taxon>Pasteurellaceae</taxon>
        <taxon>Basfia</taxon>
    </lineage>
</organism>
<keyword id="KW-0067">ATP-binding</keyword>
<keyword id="KW-0173">Coenzyme A biosynthesis</keyword>
<keyword id="KW-0963">Cytoplasm</keyword>
<keyword id="KW-0460">Magnesium</keyword>
<keyword id="KW-0547">Nucleotide-binding</keyword>
<keyword id="KW-0548">Nucleotidyltransferase</keyword>
<keyword id="KW-0808">Transferase</keyword>